<reference key="1">
    <citation type="journal article" date="2004" name="Biosci. Biotechnol. Biochem.">
        <title>Diterpene cyclases responsible for the biosynthesis of phytoalexins, momilactones A, B, and oryzalexins A-F in rice.</title>
        <authorList>
            <person name="Otomo K."/>
            <person name="Kanno Y."/>
            <person name="Motegi A."/>
            <person name="Kenmoku H."/>
            <person name="Yamane H."/>
            <person name="Mitsuhashi W."/>
            <person name="Oikawa H."/>
            <person name="Toshima H."/>
            <person name="Itoh H."/>
            <person name="Matsuoka M."/>
            <person name="Sassa T."/>
            <person name="Toyomasu T."/>
        </authorList>
    </citation>
    <scope>NUCLEOTIDE SEQUENCE [MRNA]</scope>
    <scope>FUNCTION</scope>
    <scope>CATALYTIC ACTIVITY</scope>
    <scope>INDUCTION</scope>
    <source>
        <strain>cv. Nipponbare</strain>
    </source>
</reference>
<reference key="2">
    <citation type="journal article" date="2005" name="Plant Cell Rep.">
        <title>Isolation and characterization of a Ds-tagged rice (Oryza sativa L.) GA-responsive dwarf mutant defective in an early step of the gibberellin biosynthesis pathway.</title>
        <authorList>
            <person name="Margis-Pinheiro M."/>
            <person name="Zhou X.-R."/>
            <person name="Zhu Q.-H."/>
            <person name="Dennis E.S."/>
            <person name="Upadhyaya N.M."/>
        </authorList>
    </citation>
    <scope>NUCLEOTIDE SEQUENCE [MRNA]</scope>
    <scope>TISSUE SPECIFICITY</scope>
    <scope>DEVELOPMENTAL STAGE</scope>
    <source>
        <strain>cv. Nipponbare</strain>
    </source>
</reference>
<reference key="3">
    <citation type="journal article" date="2002" name="Nature">
        <title>Sequence and analysis of rice chromosome 4.</title>
        <authorList>
            <person name="Feng Q."/>
            <person name="Zhang Y."/>
            <person name="Hao P."/>
            <person name="Wang S."/>
            <person name="Fu G."/>
            <person name="Huang Y."/>
            <person name="Li Y."/>
            <person name="Zhu J."/>
            <person name="Liu Y."/>
            <person name="Hu X."/>
            <person name="Jia P."/>
            <person name="Zhang Y."/>
            <person name="Zhao Q."/>
            <person name="Ying K."/>
            <person name="Yu S."/>
            <person name="Tang Y."/>
            <person name="Weng Q."/>
            <person name="Zhang L."/>
            <person name="Lu Y."/>
            <person name="Mu J."/>
            <person name="Lu Y."/>
            <person name="Zhang L.S."/>
            <person name="Yu Z."/>
            <person name="Fan D."/>
            <person name="Liu X."/>
            <person name="Lu T."/>
            <person name="Li C."/>
            <person name="Wu Y."/>
            <person name="Sun T."/>
            <person name="Lei H."/>
            <person name="Li T."/>
            <person name="Hu H."/>
            <person name="Guan J."/>
            <person name="Wu M."/>
            <person name="Zhang R."/>
            <person name="Zhou B."/>
            <person name="Chen Z."/>
            <person name="Chen L."/>
            <person name="Jin Z."/>
            <person name="Wang R."/>
            <person name="Yin H."/>
            <person name="Cai Z."/>
            <person name="Ren S."/>
            <person name="Lv G."/>
            <person name="Gu W."/>
            <person name="Zhu G."/>
            <person name="Tu Y."/>
            <person name="Jia J."/>
            <person name="Zhang Y."/>
            <person name="Chen J."/>
            <person name="Kang H."/>
            <person name="Chen X."/>
            <person name="Shao C."/>
            <person name="Sun Y."/>
            <person name="Hu Q."/>
            <person name="Zhang X."/>
            <person name="Zhang W."/>
            <person name="Wang L."/>
            <person name="Ding C."/>
            <person name="Sheng H."/>
            <person name="Gu J."/>
            <person name="Chen S."/>
            <person name="Ni L."/>
            <person name="Zhu F."/>
            <person name="Chen W."/>
            <person name="Lan L."/>
            <person name="Lai Y."/>
            <person name="Cheng Z."/>
            <person name="Gu M."/>
            <person name="Jiang J."/>
            <person name="Li J."/>
            <person name="Hong G."/>
            <person name="Xue Y."/>
            <person name="Han B."/>
        </authorList>
    </citation>
    <scope>NUCLEOTIDE SEQUENCE [LARGE SCALE GENOMIC DNA]</scope>
    <source>
        <strain>cv. Nipponbare</strain>
    </source>
</reference>
<reference key="4">
    <citation type="journal article" date="2005" name="Nature">
        <title>The map-based sequence of the rice genome.</title>
        <authorList>
            <consortium name="International rice genome sequencing project (IRGSP)"/>
        </authorList>
    </citation>
    <scope>NUCLEOTIDE SEQUENCE [LARGE SCALE GENOMIC DNA]</scope>
    <source>
        <strain>cv. Nipponbare</strain>
    </source>
</reference>
<reference key="5">
    <citation type="journal article" date="2008" name="Nucleic Acids Res.">
        <title>The rice annotation project database (RAP-DB): 2008 update.</title>
        <authorList>
            <consortium name="The rice annotation project (RAP)"/>
        </authorList>
    </citation>
    <scope>GENOME REANNOTATION</scope>
    <source>
        <strain>cv. Nipponbare</strain>
    </source>
</reference>
<reference key="6">
    <citation type="journal article" date="2013" name="Rice">
        <title>Improvement of the Oryza sativa Nipponbare reference genome using next generation sequence and optical map data.</title>
        <authorList>
            <person name="Kawahara Y."/>
            <person name="de la Bastide M."/>
            <person name="Hamilton J.P."/>
            <person name="Kanamori H."/>
            <person name="McCombie W.R."/>
            <person name="Ouyang S."/>
            <person name="Schwartz D.C."/>
            <person name="Tanaka T."/>
            <person name="Wu J."/>
            <person name="Zhou S."/>
            <person name="Childs K.L."/>
            <person name="Davidson R.M."/>
            <person name="Lin H."/>
            <person name="Quesada-Ocampo L."/>
            <person name="Vaillancourt B."/>
            <person name="Sakai H."/>
            <person name="Lee S.S."/>
            <person name="Kim J."/>
            <person name="Numa H."/>
            <person name="Itoh T."/>
            <person name="Buell C.R."/>
            <person name="Matsumoto T."/>
        </authorList>
    </citation>
    <scope>GENOME REANNOTATION</scope>
    <source>
        <strain>cv. Nipponbare</strain>
    </source>
</reference>
<reference key="7">
    <citation type="journal article" date="2005" name="PLoS Biol.">
        <title>The genomes of Oryza sativa: a history of duplications.</title>
        <authorList>
            <person name="Yu J."/>
            <person name="Wang J."/>
            <person name="Lin W."/>
            <person name="Li S."/>
            <person name="Li H."/>
            <person name="Zhou J."/>
            <person name="Ni P."/>
            <person name="Dong W."/>
            <person name="Hu S."/>
            <person name="Zeng C."/>
            <person name="Zhang J."/>
            <person name="Zhang Y."/>
            <person name="Li R."/>
            <person name="Xu Z."/>
            <person name="Li S."/>
            <person name="Li X."/>
            <person name="Zheng H."/>
            <person name="Cong L."/>
            <person name="Lin L."/>
            <person name="Yin J."/>
            <person name="Geng J."/>
            <person name="Li G."/>
            <person name="Shi J."/>
            <person name="Liu J."/>
            <person name="Lv H."/>
            <person name="Li J."/>
            <person name="Wang J."/>
            <person name="Deng Y."/>
            <person name="Ran L."/>
            <person name="Shi X."/>
            <person name="Wang X."/>
            <person name="Wu Q."/>
            <person name="Li C."/>
            <person name="Ren X."/>
            <person name="Wang J."/>
            <person name="Wang X."/>
            <person name="Li D."/>
            <person name="Liu D."/>
            <person name="Zhang X."/>
            <person name="Ji Z."/>
            <person name="Zhao W."/>
            <person name="Sun Y."/>
            <person name="Zhang Z."/>
            <person name="Bao J."/>
            <person name="Han Y."/>
            <person name="Dong L."/>
            <person name="Ji J."/>
            <person name="Chen P."/>
            <person name="Wu S."/>
            <person name="Liu J."/>
            <person name="Xiao Y."/>
            <person name="Bu D."/>
            <person name="Tan J."/>
            <person name="Yang L."/>
            <person name="Ye C."/>
            <person name="Zhang J."/>
            <person name="Xu J."/>
            <person name="Zhou Y."/>
            <person name="Yu Y."/>
            <person name="Zhang B."/>
            <person name="Zhuang S."/>
            <person name="Wei H."/>
            <person name="Liu B."/>
            <person name="Lei M."/>
            <person name="Yu H."/>
            <person name="Li Y."/>
            <person name="Xu H."/>
            <person name="Wei S."/>
            <person name="He X."/>
            <person name="Fang L."/>
            <person name="Zhang Z."/>
            <person name="Zhang Y."/>
            <person name="Huang X."/>
            <person name="Su Z."/>
            <person name="Tong W."/>
            <person name="Li J."/>
            <person name="Tong Z."/>
            <person name="Li S."/>
            <person name="Ye J."/>
            <person name="Wang L."/>
            <person name="Fang L."/>
            <person name="Lei T."/>
            <person name="Chen C.-S."/>
            <person name="Chen H.-C."/>
            <person name="Xu Z."/>
            <person name="Li H."/>
            <person name="Huang H."/>
            <person name="Zhang F."/>
            <person name="Xu H."/>
            <person name="Li N."/>
            <person name="Zhao C."/>
            <person name="Li S."/>
            <person name="Dong L."/>
            <person name="Huang Y."/>
            <person name="Li L."/>
            <person name="Xi Y."/>
            <person name="Qi Q."/>
            <person name="Li W."/>
            <person name="Zhang B."/>
            <person name="Hu W."/>
            <person name="Zhang Y."/>
            <person name="Tian X."/>
            <person name="Jiao Y."/>
            <person name="Liang X."/>
            <person name="Jin J."/>
            <person name="Gao L."/>
            <person name="Zheng W."/>
            <person name="Hao B."/>
            <person name="Liu S.-M."/>
            <person name="Wang W."/>
            <person name="Yuan L."/>
            <person name="Cao M."/>
            <person name="McDermott J."/>
            <person name="Samudrala R."/>
            <person name="Wang J."/>
            <person name="Wong G.K.-S."/>
            <person name="Yang H."/>
        </authorList>
    </citation>
    <scope>NUCLEOTIDE SEQUENCE [LARGE SCALE GENOMIC DNA]</scope>
    <source>
        <strain>cv. Nipponbare</strain>
    </source>
</reference>
<reference key="8">
    <citation type="journal article" date="2008" name="J. Am. Chem. Soc.">
        <title>Increasing complexity of a diterpene synthase reaction with a single residue switch.</title>
        <authorList>
            <person name="Morrone D."/>
            <person name="Xu M."/>
            <person name="Fulton D.B."/>
            <person name="Determan M.K."/>
            <person name="Peters R.J."/>
        </authorList>
    </citation>
    <scope>FUNCTION</scope>
    <scope>CATALYTIC ACTIVITY</scope>
    <scope>MUTAGENESIS OF THR-698</scope>
</reference>
<dbReference type="EC" id="4.2.3.35" evidence="3 5"/>
<dbReference type="EMBL" id="AB126934">
    <property type="protein sequence ID" value="BAD54751.1"/>
    <property type="molecule type" value="mRNA"/>
</dbReference>
<dbReference type="EMBL" id="AY347880">
    <property type="protein sequence ID" value="AAQ72563.1"/>
    <property type="molecule type" value="mRNA"/>
</dbReference>
<dbReference type="EMBL" id="AL662936">
    <property type="protein sequence ID" value="CAD39717.1"/>
    <property type="status" value="ALT_SEQ"/>
    <property type="molecule type" value="Genomic_DNA"/>
</dbReference>
<dbReference type="EMBL" id="AP008210">
    <property type="protein sequence ID" value="BAF14089.1"/>
    <property type="molecule type" value="Genomic_DNA"/>
</dbReference>
<dbReference type="EMBL" id="AP014960">
    <property type="protein sequence ID" value="BAS87953.1"/>
    <property type="molecule type" value="Genomic_DNA"/>
</dbReference>
<dbReference type="EMBL" id="CM000141">
    <property type="protein sequence ID" value="EEE60594.1"/>
    <property type="molecule type" value="Genomic_DNA"/>
</dbReference>
<dbReference type="RefSeq" id="XP_015633583.1">
    <property type="nucleotide sequence ID" value="XM_015778097.1"/>
</dbReference>
<dbReference type="SMR" id="Q0JEZ8"/>
<dbReference type="FunCoup" id="Q0JEZ8">
    <property type="interactions" value="231"/>
</dbReference>
<dbReference type="STRING" id="39947.Q0JEZ8"/>
<dbReference type="PaxDb" id="39947-Q0JEZ8"/>
<dbReference type="EnsemblPlants" id="Os04t0179700-01">
    <property type="protein sequence ID" value="Os04t0179700-01"/>
    <property type="gene ID" value="Os04g0179700"/>
</dbReference>
<dbReference type="Gramene" id="Os04t0179700-01">
    <property type="protein sequence ID" value="Os04t0179700-01"/>
    <property type="gene ID" value="Os04g0179700"/>
</dbReference>
<dbReference type="KEGG" id="dosa:Os04g0179700"/>
<dbReference type="eggNOG" id="ENOG502QVGX">
    <property type="taxonomic scope" value="Eukaryota"/>
</dbReference>
<dbReference type="HOGENOM" id="CLU_003125_2_0_1"/>
<dbReference type="InParanoid" id="Q0JEZ8"/>
<dbReference type="OMA" id="HDEVEFC"/>
<dbReference type="OrthoDB" id="2343925at2759"/>
<dbReference type="BRENDA" id="4.2.3.35">
    <property type="organism ID" value="4460"/>
</dbReference>
<dbReference type="PlantReactome" id="R-OSA-1119308">
    <property type="pathway name" value="Momilactone biosynthesis"/>
</dbReference>
<dbReference type="Proteomes" id="UP000000763">
    <property type="component" value="Chromosome 4"/>
</dbReference>
<dbReference type="Proteomes" id="UP000007752">
    <property type="component" value="Chromosome 4"/>
</dbReference>
<dbReference type="Proteomes" id="UP000059680">
    <property type="component" value="Chromosome 4"/>
</dbReference>
<dbReference type="GO" id="GO:0009507">
    <property type="term" value="C:chloroplast"/>
    <property type="evidence" value="ECO:0007669"/>
    <property type="project" value="UniProtKB-SubCell"/>
</dbReference>
<dbReference type="GO" id="GO:0000287">
    <property type="term" value="F:magnesium ion binding"/>
    <property type="evidence" value="ECO:0000318"/>
    <property type="project" value="GO_Central"/>
</dbReference>
<dbReference type="GO" id="GO:0034279">
    <property type="term" value="F:syn-pimara-7,15-diene synthase activity"/>
    <property type="evidence" value="ECO:0007669"/>
    <property type="project" value="UniProtKB-EC"/>
</dbReference>
<dbReference type="GO" id="GO:0010333">
    <property type="term" value="F:terpene synthase activity"/>
    <property type="evidence" value="ECO:0000318"/>
    <property type="project" value="GO_Central"/>
</dbReference>
<dbReference type="GO" id="GO:0006952">
    <property type="term" value="P:defense response"/>
    <property type="evidence" value="ECO:0007669"/>
    <property type="project" value="UniProtKB-KW"/>
</dbReference>
<dbReference type="GO" id="GO:0016102">
    <property type="term" value="P:diterpenoid biosynthetic process"/>
    <property type="evidence" value="ECO:0000318"/>
    <property type="project" value="GO_Central"/>
</dbReference>
<dbReference type="CDD" id="cd00684">
    <property type="entry name" value="Terpene_cyclase_plant_C1"/>
    <property type="match status" value="1"/>
</dbReference>
<dbReference type="FunFam" id="1.50.10.160:FF:000002">
    <property type="entry name" value="cis-abienol synthase, chloroplastic"/>
    <property type="match status" value="1"/>
</dbReference>
<dbReference type="FunFam" id="1.50.10.130:FF:000003">
    <property type="entry name" value="Ent-cassa-12,15-diene synthase"/>
    <property type="match status" value="1"/>
</dbReference>
<dbReference type="FunFam" id="1.10.600.10:FF:000005">
    <property type="entry name" value="Ent-kaur-16-ene synthase, chloroplastic"/>
    <property type="match status" value="1"/>
</dbReference>
<dbReference type="Gene3D" id="1.50.10.160">
    <property type="match status" value="1"/>
</dbReference>
<dbReference type="Gene3D" id="1.10.600.10">
    <property type="entry name" value="Farnesyl Diphosphate Synthase"/>
    <property type="match status" value="1"/>
</dbReference>
<dbReference type="Gene3D" id="1.50.10.130">
    <property type="entry name" value="Terpene synthase, N-terminal domain"/>
    <property type="match status" value="1"/>
</dbReference>
<dbReference type="InterPro" id="IPR008949">
    <property type="entry name" value="Isoprenoid_synthase_dom_sf"/>
</dbReference>
<dbReference type="InterPro" id="IPR044814">
    <property type="entry name" value="Terpene_cyclase_plant_C1"/>
</dbReference>
<dbReference type="InterPro" id="IPR001906">
    <property type="entry name" value="Terpene_synth_N"/>
</dbReference>
<dbReference type="InterPro" id="IPR036965">
    <property type="entry name" value="Terpene_synth_N_sf"/>
</dbReference>
<dbReference type="InterPro" id="IPR050148">
    <property type="entry name" value="Terpene_synthase-like"/>
</dbReference>
<dbReference type="InterPro" id="IPR005630">
    <property type="entry name" value="Terpene_synthase_metal-bd"/>
</dbReference>
<dbReference type="InterPro" id="IPR008930">
    <property type="entry name" value="Terpenoid_cyclase/PrenylTrfase"/>
</dbReference>
<dbReference type="PANTHER" id="PTHR31739:SF22">
    <property type="entry name" value="9-BETA-PIMARA-7,15-DIENE SYNTHASE, CHLOROPLASTIC"/>
    <property type="match status" value="1"/>
</dbReference>
<dbReference type="PANTHER" id="PTHR31739">
    <property type="entry name" value="ENT-COPALYL DIPHOSPHATE SYNTHASE, CHLOROPLASTIC"/>
    <property type="match status" value="1"/>
</dbReference>
<dbReference type="Pfam" id="PF01397">
    <property type="entry name" value="Terpene_synth"/>
    <property type="match status" value="1"/>
</dbReference>
<dbReference type="Pfam" id="PF03936">
    <property type="entry name" value="Terpene_synth_C"/>
    <property type="match status" value="1"/>
</dbReference>
<dbReference type="SFLD" id="SFLDG01014">
    <property type="entry name" value="Terpene_Cyclase_Like_1_N-term"/>
    <property type="match status" value="1"/>
</dbReference>
<dbReference type="SUPFAM" id="SSF48239">
    <property type="entry name" value="Terpenoid cyclases/Protein prenyltransferases"/>
    <property type="match status" value="2"/>
</dbReference>
<dbReference type="SUPFAM" id="SSF48576">
    <property type="entry name" value="Terpenoid synthases"/>
    <property type="match status" value="1"/>
</dbReference>
<protein>
    <recommendedName>
        <fullName evidence="6">9-beta-pimara-7,15-diene synthase, chloroplastic</fullName>
        <ecNumber evidence="3 5">4.2.3.35</ecNumber>
    </recommendedName>
    <alternativeName>
        <fullName evidence="7">Ent-kaurene synthase-like 4</fullName>
        <shortName evidence="6">OsKS4</shortName>
        <shortName evidence="7">OsKSL4</shortName>
    </alternativeName>
    <alternativeName>
        <fullName evidence="8">OsDTS2</fullName>
    </alternativeName>
    <alternativeName>
        <fullName evidence="7">Syn-pimara-7,15-diene synthase</fullName>
    </alternativeName>
</protein>
<gene>
    <name evidence="7" type="primary">KSL4</name>
    <name evidence="8" type="synonym">DTS2</name>
    <name evidence="6" type="synonym">KS4</name>
    <name type="ordered locus">Os04g0179700</name>
    <name type="ordered locus">LOC_Os04g10060</name>
    <name type="ORF">OsJ_013413</name>
    <name type="ORF">OSJNBa0052P16.14</name>
</gene>
<proteinExistence type="evidence at protein level"/>
<accession>Q0JEZ8</accession>
<accession>A0A0N7KIL5</accession>
<accession>Q60HB5</accession>
<accession>Q69DS7</accession>
<accession>Q7XX63</accession>
<keyword id="KW-0150">Chloroplast</keyword>
<keyword id="KW-0456">Lyase</keyword>
<keyword id="KW-0460">Magnesium</keyword>
<keyword id="KW-0479">Metal-binding</keyword>
<keyword id="KW-0611">Plant defense</keyword>
<keyword id="KW-0934">Plastid</keyword>
<keyword id="KW-1185">Reference proteome</keyword>
<keyword id="KW-0809">Transit peptide</keyword>
<evidence type="ECO:0000250" key="1">
    <source>
        <dbReference type="UniProtKB" id="O81086"/>
    </source>
</evidence>
<evidence type="ECO:0000255" key="2"/>
<evidence type="ECO:0000269" key="3">
    <source>
    </source>
</evidence>
<evidence type="ECO:0000269" key="4">
    <source>
    </source>
</evidence>
<evidence type="ECO:0000269" key="5">
    <source>
    </source>
</evidence>
<evidence type="ECO:0000303" key="6">
    <source>
    </source>
</evidence>
<evidence type="ECO:0000303" key="7">
    <source>
    </source>
</evidence>
<evidence type="ECO:0000305" key="8"/>
<evidence type="ECO:0000305" key="9">
    <source>
    </source>
</evidence>
<feature type="transit peptide" description="Chloroplast" evidence="2">
    <location>
        <begin position="1"/>
        <end position="56"/>
    </location>
</feature>
<feature type="chain" id="PRO_0000372315" description="9-beta-pimara-7,15-diene synthase, chloroplastic">
    <location>
        <begin position="57"/>
        <end position="842"/>
    </location>
</feature>
<feature type="short sequence motif" description="DDXXD motif" evidence="8">
    <location>
        <begin position="591"/>
        <end position="595"/>
    </location>
</feature>
<feature type="binding site" evidence="1">
    <location>
        <position position="591"/>
    </location>
    <ligand>
        <name>Mg(2+)</name>
        <dbReference type="ChEBI" id="CHEBI:18420"/>
        <label>1</label>
    </ligand>
</feature>
<feature type="binding site" evidence="1">
    <location>
        <position position="591"/>
    </location>
    <ligand>
        <name>Mg(2+)</name>
        <dbReference type="ChEBI" id="CHEBI:18420"/>
        <label>2</label>
    </ligand>
</feature>
<feature type="binding site" evidence="1">
    <location>
        <position position="595"/>
    </location>
    <ligand>
        <name>Mg(2+)</name>
        <dbReference type="ChEBI" id="CHEBI:18420"/>
        <label>1</label>
    </ligand>
</feature>
<feature type="binding site" evidence="1">
    <location>
        <position position="595"/>
    </location>
    <ligand>
        <name>Mg(2+)</name>
        <dbReference type="ChEBI" id="CHEBI:18420"/>
        <label>2</label>
    </ligand>
</feature>
<feature type="binding site" evidence="1">
    <location>
        <position position="735"/>
    </location>
    <ligand>
        <name>Mg(2+)</name>
        <dbReference type="ChEBI" id="CHEBI:18420"/>
        <label>3</label>
    </ligand>
</feature>
<feature type="binding site" evidence="1">
    <location>
        <position position="739"/>
    </location>
    <ligand>
        <name>Mg(2+)</name>
        <dbReference type="ChEBI" id="CHEBI:18420"/>
        <label>3</label>
    </ligand>
</feature>
<feature type="binding site" evidence="1">
    <location>
        <position position="743"/>
    </location>
    <ligand>
        <name>Mg(2+)</name>
        <dbReference type="ChEBI" id="CHEBI:18420"/>
        <label>3</label>
    </ligand>
</feature>
<feature type="mutagenesis site" description="Changes catalytic activity. Converts syn-copalyl diphosphate to aphidicol-15-ene and diphosphate." evidence="5">
    <original>T</original>
    <variation>I</variation>
    <location>
        <position position="698"/>
    </location>
</feature>
<feature type="sequence conflict" description="In Ref. 2; AAQ72563." evidence="8" ref="2">
    <original>I</original>
    <variation>M</variation>
    <location>
        <position position="145"/>
    </location>
</feature>
<feature type="sequence conflict" description="In Ref. 1; BAD54751." evidence="8" ref="1">
    <original>D</original>
    <variation>G</variation>
    <location>
        <position position="205"/>
    </location>
</feature>
<feature type="sequence conflict" description="In Ref. 1; BAD54751." evidence="8" ref="1">
    <original>S</original>
    <variation>G</variation>
    <location>
        <position position="525"/>
    </location>
</feature>
<feature type="sequence conflict" description="In Ref. 1; BAD54751." evidence="8" ref="1">
    <original>N</original>
    <variation>D</variation>
    <location>
        <position position="605"/>
    </location>
</feature>
<comment type="function">
    <text evidence="3 5">Involved in the biosynthesis of momilactone A and B phytoalexins. Catalyzes the conversion of syn-copalyl diphosphate to the phytoalexin precursor syn-pimara-7,15-diene.</text>
</comment>
<comment type="catalytic activity">
    <reaction evidence="3 5">
        <text>9alpha-copalyl diphosphate = 9beta-pimara-7,15-diene + diphosphate</text>
        <dbReference type="Rhea" id="RHEA:25560"/>
        <dbReference type="ChEBI" id="CHEBI:33019"/>
        <dbReference type="ChEBI" id="CHEBI:50067"/>
        <dbReference type="ChEBI" id="CHEBI:58622"/>
        <dbReference type="EC" id="4.2.3.35"/>
    </reaction>
    <physiologicalReaction direction="left-to-right" evidence="3 5">
        <dbReference type="Rhea" id="RHEA:25561"/>
    </physiologicalReaction>
</comment>
<comment type="cofactor">
    <cofactor evidence="1">
        <name>Mg(2+)</name>
        <dbReference type="ChEBI" id="CHEBI:18420"/>
    </cofactor>
    <text evidence="1">Binds 3 Mg(2+) ions per subunit.</text>
</comment>
<comment type="subcellular location">
    <subcellularLocation>
        <location evidence="2">Plastid</location>
        <location evidence="2">Chloroplast</location>
    </subcellularLocation>
</comment>
<comment type="tissue specificity">
    <text evidence="4">Expressed in roots.</text>
</comment>
<comment type="developmental stage">
    <text evidence="4">Expressed from 2 to 6 days after seed imbibition.</text>
</comment>
<comment type="induction">
    <text evidence="3">Induced by UV irradiation.</text>
</comment>
<comment type="domain">
    <text evidence="8">The Asp-Asp-Xaa-Xaa-Asp/Glu (DDXXD/E) motif is important for the catalytic activity, presumably through binding to Mg(2+).</text>
</comment>
<comment type="miscellaneous">
    <text evidence="9">9-beta-pimara-7,15-diene is a precursor of the phytoalexins momilactones A and B. Phytoalexins are diterpenoid secondary metabolites involved in the defense mechanism of the plant and produced in response to attack (by a pathogen, elicitor or UV irradiation). Momilactone B can also act as an allochemical (an antimicrobial and allelopathic agent), being constitutively produced in the root of the plant and secreted to the rhizosphere where it suppresses the growth of neighboring plants and soil microorganisms.</text>
</comment>
<comment type="similarity">
    <text evidence="8">Belongs to the terpene synthase family.</text>
</comment>
<comment type="sequence caution" evidence="8">
    <conflict type="erroneous gene model prediction">
        <sequence resource="EMBL-CDS" id="CAD39717"/>
    </conflict>
</comment>
<name>KSL4_ORYSJ</name>
<sequence length="842" mass="94956">MASPMEAVARSSLVLAPRRRRALGLLPAAAAAAPFVLDCRRRHNGGMRRPHVSFACSAELDTGRRQLPSTGTRAVMSSCPGYVEGRMVGENTSQINMGWEARILRHLENPEFLPSSYDIAWVAMVPLPGTDHLQAPCFPECVEWILQNQHSNGSWGVNEFDSSASKDILLSTLACIIALEKWNVGSEQIRRGLHFIAKNFSIVIDDQIAAPIGFNLTFPAMVNLAIKMGLEFPASEISIDQILHLRDMELKRLAGDESLGKEAYFAYIAEGLEESMVDWSEVMKFQGKNGSLFNSPAATAAALVHRYDDKALGYLYSVVNKFGGEVPTVYPLNIFSQLSMVDTLVNIGISRHFSSDIKRILDKTYILWSQRDEEVMLDLPTCAMAFRLLRMNGYGVSSDDLSHVAEASTFHNSVEGYLDDTKSLLELYKASKVSLSENEPILEKMGCWSGSLLKEKLCSDDIRGTPILREVEYALKFPFYATLEPLDHKWNIENFDARAYQKIKTKNMPCHVNEDLLALAAEDFSFCQSTYQNEIQHLESWEKENKLDQLEFTRKNLINSYLSAAATISPYELSDARIACAKSIALTLVADDFFDVGSSKEEQENLISLVEKWDQYHKVEFYSENVKAVFFALYSTVNQLGAMASAVQNRDVTKYNVESWLDYLRSLATDAEWQRSKYVPTMEEYMKNSIVTFALGPTILIALYFMGQNLWEDIVKNAEYDELFRLMNTCGRLQNDIQSFERECKDGKLNSVSLLVLDSKDVMSVEEAKEAINESISSCRRELLRLVVREDGVIPKSCKEMFWNLYKTSHVFYSQADGFSSPKEMMGAMNGVIFEPLKTRGN</sequence>
<organism>
    <name type="scientific">Oryza sativa subsp. japonica</name>
    <name type="common">Rice</name>
    <dbReference type="NCBI Taxonomy" id="39947"/>
    <lineage>
        <taxon>Eukaryota</taxon>
        <taxon>Viridiplantae</taxon>
        <taxon>Streptophyta</taxon>
        <taxon>Embryophyta</taxon>
        <taxon>Tracheophyta</taxon>
        <taxon>Spermatophyta</taxon>
        <taxon>Magnoliopsida</taxon>
        <taxon>Liliopsida</taxon>
        <taxon>Poales</taxon>
        <taxon>Poaceae</taxon>
        <taxon>BOP clade</taxon>
        <taxon>Oryzoideae</taxon>
        <taxon>Oryzeae</taxon>
        <taxon>Oryzinae</taxon>
        <taxon>Oryza</taxon>
        <taxon>Oryza sativa</taxon>
    </lineage>
</organism>